<reference key="1">
    <citation type="journal article" date="2009" name="Proc. Natl. Acad. Sci. U.S.A.">
        <title>Biogeography of the Sulfolobus islandicus pan-genome.</title>
        <authorList>
            <person name="Reno M.L."/>
            <person name="Held N.L."/>
            <person name="Fields C.J."/>
            <person name="Burke P.V."/>
            <person name="Whitaker R.J."/>
        </authorList>
    </citation>
    <scope>NUCLEOTIDE SEQUENCE [LARGE SCALE GENOMIC DNA]</scope>
    <source>
        <strain>M.14.25 / Kamchatka #1</strain>
    </source>
</reference>
<comment type="function">
    <text evidence="1">Promotes the exchange of GDP for GTP in EF-1-alpha/GDP, thus allowing the regeneration of EF-1-alpha/GTP that could then be used to form the ternary complex EF-1-alpha/GTP/AAtRNA.</text>
</comment>
<comment type="similarity">
    <text evidence="1">Belongs to the EF-1-beta/EF-1-delta family.</text>
</comment>
<feature type="chain" id="PRO_1000202145" description="Elongation factor 1-beta">
    <location>
        <begin position="1"/>
        <end position="91"/>
    </location>
</feature>
<evidence type="ECO:0000255" key="1">
    <source>
        <dbReference type="HAMAP-Rule" id="MF_00043"/>
    </source>
</evidence>
<gene>
    <name evidence="1" type="primary">ef1b</name>
    <name type="ordered locus">M1425_1960</name>
</gene>
<protein>
    <recommendedName>
        <fullName evidence="1">Elongation factor 1-beta</fullName>
        <shortName evidence="1">EF-1-beta</shortName>
    </recommendedName>
    <alternativeName>
        <fullName evidence="1">aEF-1beta</fullName>
    </alternativeName>
</protein>
<keyword id="KW-0251">Elongation factor</keyword>
<keyword id="KW-0648">Protein biosynthesis</keyword>
<accession>C3MYE7</accession>
<dbReference type="EMBL" id="CP001400">
    <property type="protein sequence ID" value="ACP38704.1"/>
    <property type="molecule type" value="Genomic_DNA"/>
</dbReference>
<dbReference type="RefSeq" id="WP_012711931.1">
    <property type="nucleotide sequence ID" value="NC_012588.1"/>
</dbReference>
<dbReference type="SMR" id="C3MYE7"/>
<dbReference type="KEGG" id="sia:M1425_1960"/>
<dbReference type="HOGENOM" id="CLU_165896_1_0_2"/>
<dbReference type="Proteomes" id="UP000001350">
    <property type="component" value="Chromosome"/>
</dbReference>
<dbReference type="GO" id="GO:0003746">
    <property type="term" value="F:translation elongation factor activity"/>
    <property type="evidence" value="ECO:0007669"/>
    <property type="project" value="UniProtKB-UniRule"/>
</dbReference>
<dbReference type="CDD" id="cd00292">
    <property type="entry name" value="EF1B"/>
    <property type="match status" value="1"/>
</dbReference>
<dbReference type="Gene3D" id="3.30.70.60">
    <property type="match status" value="1"/>
</dbReference>
<dbReference type="HAMAP" id="MF_00043">
    <property type="entry name" value="EF1_beta"/>
    <property type="match status" value="1"/>
</dbReference>
<dbReference type="InterPro" id="IPR036219">
    <property type="entry name" value="eEF-1beta-like_sf"/>
</dbReference>
<dbReference type="InterPro" id="IPR014038">
    <property type="entry name" value="EF1B_bsu/dsu_GNE"/>
</dbReference>
<dbReference type="InterPro" id="IPR014717">
    <property type="entry name" value="Transl_elong_EF1B/ribsomal_bS6"/>
</dbReference>
<dbReference type="InterPro" id="IPR004542">
    <property type="entry name" value="Transl_elong_EF1B_B_arc"/>
</dbReference>
<dbReference type="NCBIfam" id="TIGR00489">
    <property type="entry name" value="aEF-1_beta"/>
    <property type="match status" value="1"/>
</dbReference>
<dbReference type="NCBIfam" id="NF001670">
    <property type="entry name" value="PRK00435.1"/>
    <property type="match status" value="1"/>
</dbReference>
<dbReference type="PANTHER" id="PTHR39647">
    <property type="entry name" value="ELONGATION FACTOR 1-BETA"/>
    <property type="match status" value="1"/>
</dbReference>
<dbReference type="PANTHER" id="PTHR39647:SF1">
    <property type="entry name" value="ELONGATION FACTOR 1-BETA"/>
    <property type="match status" value="1"/>
</dbReference>
<dbReference type="Pfam" id="PF00736">
    <property type="entry name" value="EF1_GNE"/>
    <property type="match status" value="1"/>
</dbReference>
<dbReference type="PIRSF" id="PIRSF006521">
    <property type="entry name" value="Transl_elong_EF1B_B_arc"/>
    <property type="match status" value="1"/>
</dbReference>
<dbReference type="SMART" id="SM00888">
    <property type="entry name" value="EF1_GNE"/>
    <property type="match status" value="1"/>
</dbReference>
<dbReference type="SUPFAM" id="SSF54984">
    <property type="entry name" value="eEF-1beta-like"/>
    <property type="match status" value="1"/>
</dbReference>
<sequence>MTDVLVVLKVFPDSDEVNLDNLYTDISNKLPKEYRIIRKETEPIAFGLNALILYVQMPEQTEGGTDNLEEVVNNIQGVSHAEVVGITRLGF</sequence>
<proteinExistence type="inferred from homology"/>
<name>EF1B_SACI4</name>
<organism>
    <name type="scientific">Saccharolobus islandicus (strain M.14.25 / Kamchatka #1)</name>
    <name type="common">Sulfolobus islandicus</name>
    <dbReference type="NCBI Taxonomy" id="427317"/>
    <lineage>
        <taxon>Archaea</taxon>
        <taxon>Thermoproteota</taxon>
        <taxon>Thermoprotei</taxon>
        <taxon>Sulfolobales</taxon>
        <taxon>Sulfolobaceae</taxon>
        <taxon>Saccharolobus</taxon>
    </lineage>
</organism>